<dbReference type="GO" id="GO:0005576">
    <property type="term" value="C:extracellular region"/>
    <property type="evidence" value="ECO:0007669"/>
    <property type="project" value="UniProtKB-SubCell"/>
</dbReference>
<dbReference type="GO" id="GO:0005344">
    <property type="term" value="F:oxygen carrier activity"/>
    <property type="evidence" value="ECO:0007669"/>
    <property type="project" value="UniProtKB-KW"/>
</dbReference>
<organism evidence="1">
    <name type="scientific">Homarus americanus</name>
    <name type="common">American lobster</name>
    <dbReference type="NCBI Taxonomy" id="6706"/>
    <lineage>
        <taxon>Eukaryota</taxon>
        <taxon>Metazoa</taxon>
        <taxon>Ecdysozoa</taxon>
        <taxon>Arthropoda</taxon>
        <taxon>Crustacea</taxon>
        <taxon>Multicrustacea</taxon>
        <taxon>Malacostraca</taxon>
        <taxon>Eumalacostraca</taxon>
        <taxon>Eucarida</taxon>
        <taxon>Decapoda</taxon>
        <taxon>Pleocyemata</taxon>
        <taxon>Astacidea</taxon>
        <taxon>Nephropoidea</taxon>
        <taxon>Nephropidae</taxon>
        <taxon>Homarus</taxon>
    </lineage>
</organism>
<name>HCY6_HOMAM</name>
<comment type="function">
    <text>Hemocyanins are copper-containing oxygen carriers occurring freely dissolved in the hemolymph of many mollusks and arthropods.</text>
</comment>
<comment type="subcellular location">
    <subcellularLocation>
        <location>Secreted</location>
        <location>Extracellular space</location>
    </subcellularLocation>
</comment>
<comment type="tissue specificity">
    <text>Hemolymph.</text>
</comment>
<comment type="similarity">
    <text evidence="1">Belongs to the tyrosinase family. Hemocyanin subfamily.</text>
</comment>
<sequence>SPAFQAQKQAKVNDVLDKLY</sequence>
<feature type="chain" id="PRO_0000204277" description="Hemocyanin subunit 6">
    <location>
        <begin position="1"/>
        <end position="20" status="greater than"/>
    </location>
</feature>
<feature type="non-terminal residue" evidence="1">
    <location>
        <position position="20"/>
    </location>
</feature>
<keyword id="KW-0186">Copper</keyword>
<keyword id="KW-0903">Direct protein sequencing</keyword>
<keyword id="KW-0561">Oxygen transport</keyword>
<keyword id="KW-0964">Secreted</keyword>
<keyword id="KW-0813">Transport</keyword>
<proteinExistence type="evidence at protein level"/>
<protein>
    <recommendedName>
        <fullName>Hemocyanin subunit 6</fullName>
    </recommendedName>
</protein>
<evidence type="ECO:0000305" key="1"/>
<accession>P82301</accession>
<reference evidence="1" key="1">
    <citation type="journal article" date="1999" name="Comp. Biochem. Physiol.">
        <title>Subunit composition and N-terminal analysis of arthropod hemocyanins.</title>
        <authorList>
            <person name="Stoeva S."/>
            <person name="Dolashka P."/>
            <person name="Hristova R."/>
            <person name="Genov N."/>
            <person name="Voelter W."/>
        </authorList>
    </citation>
    <scope>PROTEIN SEQUENCE</scope>
</reference>